<proteinExistence type="inferred from homology"/>
<reference key="1">
    <citation type="journal article" date="2007" name="Nature">
        <title>Evolution of genes and genomes on the Drosophila phylogeny.</title>
        <authorList>
            <consortium name="Drosophila 12 genomes consortium"/>
        </authorList>
    </citation>
    <scope>NUCLEOTIDE SEQUENCE [LARGE SCALE GENOMIC DNA]</scope>
    <source>
        <strain>Tucson 14024-0371.13</strain>
    </source>
</reference>
<name>ANM7_DROAN</name>
<protein>
    <recommendedName>
        <fullName>Protein arginine N-methyltransferase 7</fullName>
        <ecNumber>2.1.1.-</ecNumber>
    </recommendedName>
</protein>
<evidence type="ECO:0000250" key="1"/>
<evidence type="ECO:0000255" key="2">
    <source>
        <dbReference type="PROSITE-ProRule" id="PRU01015"/>
    </source>
</evidence>
<dbReference type="EC" id="2.1.1.-"/>
<dbReference type="EMBL" id="CH902619">
    <property type="protein sequence ID" value="EDV37659.1"/>
    <property type="molecule type" value="Genomic_DNA"/>
</dbReference>
<dbReference type="RefSeq" id="XP_001960837.2">
    <property type="nucleotide sequence ID" value="XM_001960801.2"/>
</dbReference>
<dbReference type="SMR" id="B3MF31"/>
<dbReference type="FunCoup" id="B3MF31">
    <property type="interactions" value="2076"/>
</dbReference>
<dbReference type="STRING" id="7217.B3MF31"/>
<dbReference type="EnsemblMetazoa" id="FBtr0116003">
    <property type="protein sequence ID" value="FBpp0114495"/>
    <property type="gene ID" value="FBgn0088343"/>
</dbReference>
<dbReference type="KEGG" id="dan:6494167"/>
<dbReference type="eggNOG" id="KOG1501">
    <property type="taxonomic scope" value="Eukaryota"/>
</dbReference>
<dbReference type="HOGENOM" id="CLU_015180_0_0_1"/>
<dbReference type="InParanoid" id="B3MF31"/>
<dbReference type="OMA" id="CHHDEYS"/>
<dbReference type="PhylomeDB" id="B3MF31"/>
<dbReference type="Proteomes" id="UP000007801">
    <property type="component" value="Unassembled WGS sequence"/>
</dbReference>
<dbReference type="GO" id="GO:0042054">
    <property type="term" value="F:histone methyltransferase activity"/>
    <property type="evidence" value="ECO:0007669"/>
    <property type="project" value="TreeGrafter"/>
</dbReference>
<dbReference type="GO" id="GO:0035243">
    <property type="term" value="F:protein-arginine omega-N symmetric methyltransferase activity"/>
    <property type="evidence" value="ECO:0000250"/>
    <property type="project" value="UniProtKB"/>
</dbReference>
<dbReference type="GO" id="GO:0018216">
    <property type="term" value="P:peptidyl-arginine methylation"/>
    <property type="evidence" value="ECO:0000250"/>
    <property type="project" value="UniProtKB"/>
</dbReference>
<dbReference type="CDD" id="cd02440">
    <property type="entry name" value="AdoMet_MTases"/>
    <property type="match status" value="1"/>
</dbReference>
<dbReference type="FunFam" id="2.70.160.11:FF:000014">
    <property type="entry name" value="Protein arginine N-methyltransferase 7"/>
    <property type="match status" value="1"/>
</dbReference>
<dbReference type="FunFam" id="2.70.160.11:FF:000019">
    <property type="entry name" value="Protein arginine N-methyltransferase 7"/>
    <property type="match status" value="1"/>
</dbReference>
<dbReference type="FunFam" id="3.40.50.150:FF:000070">
    <property type="entry name" value="Protein arginine N-methyltransferase 7"/>
    <property type="match status" value="1"/>
</dbReference>
<dbReference type="FunFam" id="3.40.50.150:FF:000071">
    <property type="entry name" value="Protein arginine N-methyltransferase 7"/>
    <property type="match status" value="1"/>
</dbReference>
<dbReference type="Gene3D" id="2.70.160.11">
    <property type="entry name" value="Hnrnp arginine n-methyltransferase1"/>
    <property type="match status" value="2"/>
</dbReference>
<dbReference type="Gene3D" id="3.40.50.150">
    <property type="entry name" value="Vaccinia Virus protein VP39"/>
    <property type="match status" value="2"/>
</dbReference>
<dbReference type="InterPro" id="IPR025799">
    <property type="entry name" value="Arg_MeTrfase"/>
</dbReference>
<dbReference type="InterPro" id="IPR014644">
    <property type="entry name" value="MeTrfase_PRMT7"/>
</dbReference>
<dbReference type="InterPro" id="IPR055135">
    <property type="entry name" value="PRMT_dom"/>
</dbReference>
<dbReference type="InterPro" id="IPR029063">
    <property type="entry name" value="SAM-dependent_MTases_sf"/>
</dbReference>
<dbReference type="PANTHER" id="PTHR11006">
    <property type="entry name" value="PROTEIN ARGININE N-METHYLTRANSFERASE"/>
    <property type="match status" value="1"/>
</dbReference>
<dbReference type="PANTHER" id="PTHR11006:SF4">
    <property type="entry name" value="PROTEIN ARGININE N-METHYLTRANSFERASE 7"/>
    <property type="match status" value="1"/>
</dbReference>
<dbReference type="Pfam" id="PF06325">
    <property type="entry name" value="PrmA"/>
    <property type="match status" value="1"/>
</dbReference>
<dbReference type="Pfam" id="PF22528">
    <property type="entry name" value="PRMT_C"/>
    <property type="match status" value="2"/>
</dbReference>
<dbReference type="PIRSF" id="PIRSF036946">
    <property type="entry name" value="Arg_N-mtase"/>
    <property type="match status" value="1"/>
</dbReference>
<dbReference type="SUPFAM" id="SSF53335">
    <property type="entry name" value="S-adenosyl-L-methionine-dependent methyltransferases"/>
    <property type="match status" value="2"/>
</dbReference>
<dbReference type="PROSITE" id="PS51678">
    <property type="entry name" value="SAM_MT_PRMT"/>
    <property type="match status" value="2"/>
</dbReference>
<organism>
    <name type="scientific">Drosophila ananassae</name>
    <name type="common">Fruit fly</name>
    <dbReference type="NCBI Taxonomy" id="7217"/>
    <lineage>
        <taxon>Eukaryota</taxon>
        <taxon>Metazoa</taxon>
        <taxon>Ecdysozoa</taxon>
        <taxon>Arthropoda</taxon>
        <taxon>Hexapoda</taxon>
        <taxon>Insecta</taxon>
        <taxon>Pterygota</taxon>
        <taxon>Neoptera</taxon>
        <taxon>Endopterygota</taxon>
        <taxon>Diptera</taxon>
        <taxon>Brachycera</taxon>
        <taxon>Muscomorpha</taxon>
        <taxon>Ephydroidea</taxon>
        <taxon>Drosophilidae</taxon>
        <taxon>Drosophila</taxon>
        <taxon>Sophophora</taxon>
    </lineage>
</organism>
<sequence>MSCFSQVLNPITGENSWQEREDDYDYHQEVANAGFGDMLHDWERNQKYFAALRKTIAEMRTAGKEVHVLDIGTGTGILSMMALEAGADSVTACEAFLPMANCAEKILAANGAADKVRLIRKRSTDIQIGEDMPRKANLLVAELLDTELIGEGAIGIYNHAHDELLTEDALCIPARARCYAQVAQSPLAAQWNSLKSLANLDGEPLLQPPAQLKGCKGEAGLHDVQLSQLPSHTFRPLTDPVEIFQFDFQRKKQREKKRDQLLKVQSNQPGSAELVFYWWDIQLDDGGEILLSCAPYWAHPEIHELSGKKGKDLPLPNVVPWRDHWMQAIYYIPKPLQLLEAGKSFHLSCHHDEYSLWFDAREEAPAKSVSRHTCTCDLHMTYSRSRIGQMNQSTRNKRYLRYLEENIEAEKSKVLVLGNGCLLGLASSALGATSVQLHEPHRFSRRLLESIVQHNQLKNVEFVDKVEEVEDSQLAGLTHVFAEPYFLNAILPWDNFYFGTLLAKIKDKLPEDVKISPCSARIYALPVEFLDLHKIRAPVVSCEGFDLRLFDEMVERSAEQAVTLVEAQPLWEYPCRALSEPQEILNVDFNKFSEEHHLKGTIDLKHPGTCNGVALWVDWQLINDSSPRSIVSTGPSEAVTPGEFVKWDMFVRQGVHFPQKTNQTISSLAWSTDFKPLLGQLSFTFGQKKP</sequence>
<feature type="chain" id="PRO_0000373911" description="Protein arginine N-methyltransferase 7">
    <location>
        <begin position="1"/>
        <end position="690"/>
    </location>
</feature>
<feature type="domain" description="SAM-dependent MTase PRMT-type 1" evidence="2">
    <location>
        <begin position="14"/>
        <end position="357"/>
    </location>
</feature>
<feature type="domain" description="SAM-dependent MTase PRMT-type 2" evidence="2">
    <location>
        <begin position="366"/>
        <end position="690"/>
    </location>
</feature>
<gene>
    <name type="primary">Art7</name>
    <name type="ORF">GF11303</name>
</gene>
<keyword id="KW-0489">Methyltransferase</keyword>
<keyword id="KW-1185">Reference proteome</keyword>
<keyword id="KW-0677">Repeat</keyword>
<keyword id="KW-0949">S-adenosyl-L-methionine</keyword>
<keyword id="KW-0808">Transferase</keyword>
<comment type="function">
    <text evidence="1">Essential arginine methyltransferase that can both catalyze the formation of omega-N monomethylarginine (MMA) and symmetrical dimethylarginine (sDMA). Specifically mediates the symmetrical dimethylation of arginine residues in the small nuclear ribonucleoproteins SmD1 and SmD3 (By similarity).</text>
</comment>
<comment type="similarity">
    <text evidence="2">Belongs to the class I-like SAM-binding methyltransferase superfamily. Protein arginine N-methyltransferase family. PRMT7 subfamily.</text>
</comment>
<accession>B3MF31</accession>